<name>PDXS_FRAP2</name>
<comment type="function">
    <text evidence="1">Catalyzes the formation of pyridoxal 5'-phosphate from ribose 5-phosphate (RBP), glyceraldehyde 3-phosphate (G3P) and ammonia. The ammonia is provided by the PdxT subunit. Can also use ribulose 5-phosphate and dihydroxyacetone phosphate as substrates, resulting from enzyme-catalyzed isomerization of RBP and G3P, respectively.</text>
</comment>
<comment type="catalytic activity">
    <reaction evidence="1">
        <text>aldehydo-D-ribose 5-phosphate + D-glyceraldehyde 3-phosphate + L-glutamine = pyridoxal 5'-phosphate + L-glutamate + phosphate + 3 H2O + H(+)</text>
        <dbReference type="Rhea" id="RHEA:31507"/>
        <dbReference type="ChEBI" id="CHEBI:15377"/>
        <dbReference type="ChEBI" id="CHEBI:15378"/>
        <dbReference type="ChEBI" id="CHEBI:29985"/>
        <dbReference type="ChEBI" id="CHEBI:43474"/>
        <dbReference type="ChEBI" id="CHEBI:58273"/>
        <dbReference type="ChEBI" id="CHEBI:58359"/>
        <dbReference type="ChEBI" id="CHEBI:59776"/>
        <dbReference type="ChEBI" id="CHEBI:597326"/>
        <dbReference type="EC" id="4.3.3.6"/>
    </reaction>
</comment>
<comment type="pathway">
    <text evidence="1">Cofactor biosynthesis; pyridoxal 5'-phosphate biosynthesis.</text>
</comment>
<comment type="subunit">
    <text evidence="1">In the presence of PdxT, forms a dodecamer of heterodimers.</text>
</comment>
<comment type="similarity">
    <text evidence="1">Belongs to the PdxS/SNZ family.</text>
</comment>
<organism>
    <name type="scientific">Francisella philomiragia subsp. philomiragia (strain ATCC 25017 / CCUG 19701 / FSC 153 / O#319-036)</name>
    <dbReference type="NCBI Taxonomy" id="484022"/>
    <lineage>
        <taxon>Bacteria</taxon>
        <taxon>Pseudomonadati</taxon>
        <taxon>Pseudomonadota</taxon>
        <taxon>Gammaproteobacteria</taxon>
        <taxon>Thiotrichales</taxon>
        <taxon>Francisellaceae</taxon>
        <taxon>Francisella</taxon>
    </lineage>
</organism>
<accession>B0TZ17</accession>
<dbReference type="EC" id="4.3.3.6" evidence="1"/>
<dbReference type="EMBL" id="CP000937">
    <property type="protein sequence ID" value="ABZ86456.1"/>
    <property type="molecule type" value="Genomic_DNA"/>
</dbReference>
<dbReference type="SMR" id="B0TZ17"/>
<dbReference type="KEGG" id="fph:Fphi_0240"/>
<dbReference type="eggNOG" id="COG0214">
    <property type="taxonomic scope" value="Bacteria"/>
</dbReference>
<dbReference type="HOGENOM" id="CLU_055352_1_0_6"/>
<dbReference type="UniPathway" id="UPA00245"/>
<dbReference type="GO" id="GO:0036381">
    <property type="term" value="F:pyridoxal 5'-phosphate synthase (glutamine hydrolysing) activity"/>
    <property type="evidence" value="ECO:0007669"/>
    <property type="project" value="UniProtKB-UniRule"/>
</dbReference>
<dbReference type="GO" id="GO:0006520">
    <property type="term" value="P:amino acid metabolic process"/>
    <property type="evidence" value="ECO:0007669"/>
    <property type="project" value="TreeGrafter"/>
</dbReference>
<dbReference type="GO" id="GO:0042823">
    <property type="term" value="P:pyridoxal phosphate biosynthetic process"/>
    <property type="evidence" value="ECO:0007669"/>
    <property type="project" value="UniProtKB-UniRule"/>
</dbReference>
<dbReference type="GO" id="GO:0008615">
    <property type="term" value="P:pyridoxine biosynthetic process"/>
    <property type="evidence" value="ECO:0007669"/>
    <property type="project" value="TreeGrafter"/>
</dbReference>
<dbReference type="CDD" id="cd04727">
    <property type="entry name" value="pdxS"/>
    <property type="match status" value="1"/>
</dbReference>
<dbReference type="FunFam" id="3.20.20.70:FF:000001">
    <property type="entry name" value="Pyridoxine biosynthesis protein PDX1"/>
    <property type="match status" value="1"/>
</dbReference>
<dbReference type="Gene3D" id="3.20.20.70">
    <property type="entry name" value="Aldolase class I"/>
    <property type="match status" value="1"/>
</dbReference>
<dbReference type="HAMAP" id="MF_01824">
    <property type="entry name" value="PdxS"/>
    <property type="match status" value="1"/>
</dbReference>
<dbReference type="InterPro" id="IPR013785">
    <property type="entry name" value="Aldolase_TIM"/>
</dbReference>
<dbReference type="InterPro" id="IPR001852">
    <property type="entry name" value="PdxS/SNZ"/>
</dbReference>
<dbReference type="InterPro" id="IPR033755">
    <property type="entry name" value="PdxS/SNZ_N"/>
</dbReference>
<dbReference type="InterPro" id="IPR011060">
    <property type="entry name" value="RibuloseP-bd_barrel"/>
</dbReference>
<dbReference type="NCBIfam" id="NF003215">
    <property type="entry name" value="PRK04180.1"/>
    <property type="match status" value="1"/>
</dbReference>
<dbReference type="NCBIfam" id="TIGR00343">
    <property type="entry name" value="pyridoxal 5'-phosphate synthase lyase subunit PdxS"/>
    <property type="match status" value="1"/>
</dbReference>
<dbReference type="PANTHER" id="PTHR31829">
    <property type="entry name" value="PYRIDOXAL 5'-PHOSPHATE SYNTHASE SUBUNIT SNZ1-RELATED"/>
    <property type="match status" value="1"/>
</dbReference>
<dbReference type="PANTHER" id="PTHR31829:SF0">
    <property type="entry name" value="PYRIDOXAL 5'-PHOSPHATE SYNTHASE SUBUNIT SNZ1-RELATED"/>
    <property type="match status" value="1"/>
</dbReference>
<dbReference type="Pfam" id="PF01680">
    <property type="entry name" value="SOR_SNZ"/>
    <property type="match status" value="1"/>
</dbReference>
<dbReference type="PIRSF" id="PIRSF029271">
    <property type="entry name" value="Pdx1"/>
    <property type="match status" value="1"/>
</dbReference>
<dbReference type="SUPFAM" id="SSF51366">
    <property type="entry name" value="Ribulose-phoshate binding barrel"/>
    <property type="match status" value="1"/>
</dbReference>
<dbReference type="PROSITE" id="PS01235">
    <property type="entry name" value="PDXS_SNZ_1"/>
    <property type="match status" value="1"/>
</dbReference>
<dbReference type="PROSITE" id="PS51129">
    <property type="entry name" value="PDXS_SNZ_2"/>
    <property type="match status" value="1"/>
</dbReference>
<keyword id="KW-0456">Lyase</keyword>
<keyword id="KW-0663">Pyridoxal phosphate</keyword>
<keyword id="KW-0704">Schiff base</keyword>
<evidence type="ECO:0000255" key="1">
    <source>
        <dbReference type="HAMAP-Rule" id="MF_01824"/>
    </source>
</evidence>
<proteinExistence type="inferred from homology"/>
<feature type="chain" id="PRO_1000088407" description="Pyridoxal 5'-phosphate synthase subunit PdxS">
    <location>
        <begin position="1"/>
        <end position="287"/>
    </location>
</feature>
<feature type="active site" description="Schiff-base intermediate with D-ribose 5-phosphate" evidence="1">
    <location>
        <position position="78"/>
    </location>
</feature>
<feature type="binding site" evidence="1">
    <location>
        <position position="21"/>
    </location>
    <ligand>
        <name>D-ribose 5-phosphate</name>
        <dbReference type="ChEBI" id="CHEBI:78346"/>
    </ligand>
</feature>
<feature type="binding site" evidence="1">
    <location>
        <position position="150"/>
    </location>
    <ligand>
        <name>D-ribose 5-phosphate</name>
        <dbReference type="ChEBI" id="CHEBI:78346"/>
    </ligand>
</feature>
<feature type="binding site" evidence="1">
    <location>
        <position position="162"/>
    </location>
    <ligand>
        <name>D-glyceraldehyde 3-phosphate</name>
        <dbReference type="ChEBI" id="CHEBI:59776"/>
    </ligand>
</feature>
<feature type="binding site" evidence="1">
    <location>
        <position position="211"/>
    </location>
    <ligand>
        <name>D-ribose 5-phosphate</name>
        <dbReference type="ChEBI" id="CHEBI:78346"/>
    </ligand>
</feature>
<feature type="binding site" evidence="1">
    <location>
        <begin position="232"/>
        <end position="233"/>
    </location>
    <ligand>
        <name>D-ribose 5-phosphate</name>
        <dbReference type="ChEBI" id="CHEBI:78346"/>
    </ligand>
</feature>
<protein>
    <recommendedName>
        <fullName evidence="1">Pyridoxal 5'-phosphate synthase subunit PdxS</fullName>
        <shortName evidence="1">PLP synthase subunit PdxS</shortName>
        <ecNumber evidence="1">4.3.3.6</ecNumber>
    </recommendedName>
    <alternativeName>
        <fullName evidence="1">Pdx1</fullName>
    </alternativeName>
</protein>
<gene>
    <name evidence="1" type="primary">pdxS</name>
    <name type="ordered locus">Fphi_0240</name>
</gene>
<reference key="1">
    <citation type="submission" date="2007-12" db="EMBL/GenBank/DDBJ databases">
        <title>Complete sequence of chromosome of Francisella philomiragia subsp. philomiragia ATCC 25017.</title>
        <authorList>
            <consortium name="US DOE Joint Genome Institute"/>
            <person name="Copeland A."/>
            <person name="Lucas S."/>
            <person name="Lapidus A."/>
            <person name="Barry K."/>
            <person name="Detter J.C."/>
            <person name="Glavina del Rio T."/>
            <person name="Hammon N."/>
            <person name="Israni S."/>
            <person name="Dalin E."/>
            <person name="Tice H."/>
            <person name="Pitluck S."/>
            <person name="Chain P."/>
            <person name="Malfatti S."/>
            <person name="Shin M."/>
            <person name="Vergez L."/>
            <person name="Schmutz J."/>
            <person name="Larimer F."/>
            <person name="Land M."/>
            <person name="Hauser L."/>
            <person name="Richardson P."/>
        </authorList>
    </citation>
    <scope>NUCLEOTIDE SEQUENCE [LARGE SCALE GENOMIC DNA]</scope>
    <source>
        <strain>ATCC 25017 / CCUG 19701 / FSC 153 / O#319-036</strain>
    </source>
</reference>
<sequence>MSDINLKIGLAEMLKGGVIMDVVNAEQAEIAQQAGAVAVMALERVPADIRKDGGIARMSDPKLIKEIMSVTSIPVMAKARIGHFVEAQILESLGVDFIDESEVLSPADDLNHIAKDNFKVPFVCGCTNLGEALRRIGEGAALIRTKGEAGTGNIVEAVRQLRQVNKDINYIKGADQSELMAIAKNMQAPYDLVKYVHKNGKLPVPNFSAGGVATPADAALMMQLGAESVFVGSGIFKSADPLKRAKAIVSAVTYYNDPKILAEVSEDLGEPMTGINCDFEKFSQRGW</sequence>